<sequence>MERLTIVKVGGEIIRIPEVRDSFLKDFSIIAGYKILVHGGGSMLTELARNLDIETQMIDGRRVTTEKILKLAVMVYAGLINKEIVVGLQALGVDALGFTGADSNIICSEKRPIRDSIDYGLVGDIQEINVQLLNEFLNKGHTPIFAPITHNGGGQLLNTNADSIAGELAKVLVYDYNVRLVYCFDKKGVLYDEGDENSFISVLSYTDFQRYKENGIIGGGMLPKLDSAFNALSAGVKEVIITCASNIKHTGSGTHLKL</sequence>
<name>ARGB_AZOPC</name>
<gene>
    <name evidence="1" type="primary">argB</name>
    <name type="ordered locus">CFPG_727</name>
</gene>
<protein>
    <recommendedName>
        <fullName evidence="1">Acetylglutamate kinase</fullName>
        <ecNumber evidence="1">2.7.2.8</ecNumber>
    </recommendedName>
    <alternativeName>
        <fullName evidence="1">N-acetyl-L-glutamate 5-phosphotransferase</fullName>
    </alternativeName>
    <alternativeName>
        <fullName evidence="1">NAG kinase</fullName>
        <shortName evidence="1">NAGK</shortName>
    </alternativeName>
</protein>
<reference key="1">
    <citation type="journal article" date="2008" name="Science">
        <title>Genome of an endosymbiont coupling N2 fixation to cellulolysis within RT protist cells in termite gut.</title>
        <authorList>
            <person name="Hongoh Y."/>
            <person name="Sharma V.K."/>
            <person name="Prakash T."/>
            <person name="Noda S."/>
            <person name="Toh H."/>
            <person name="Taylor T.D."/>
            <person name="Kudo T."/>
            <person name="Sakaki Y."/>
            <person name="Toyoda A."/>
            <person name="Hattori M."/>
            <person name="Ohkuma M."/>
        </authorList>
    </citation>
    <scope>NUCLEOTIDE SEQUENCE [LARGE SCALE GENOMIC DNA]</scope>
</reference>
<proteinExistence type="inferred from homology"/>
<accession>B6YS18</accession>
<comment type="function">
    <text evidence="1">Catalyzes the ATP-dependent phosphorylation of N-acetyl-L-glutamate.</text>
</comment>
<comment type="catalytic activity">
    <reaction evidence="1">
        <text>N-acetyl-L-glutamate + ATP = N-acetyl-L-glutamyl 5-phosphate + ADP</text>
        <dbReference type="Rhea" id="RHEA:14629"/>
        <dbReference type="ChEBI" id="CHEBI:30616"/>
        <dbReference type="ChEBI" id="CHEBI:44337"/>
        <dbReference type="ChEBI" id="CHEBI:57936"/>
        <dbReference type="ChEBI" id="CHEBI:456216"/>
        <dbReference type="EC" id="2.7.2.8"/>
    </reaction>
</comment>
<comment type="pathway">
    <text evidence="1">Amino-acid biosynthesis; L-arginine biosynthesis; N(2)-acetyl-L-ornithine from L-glutamate: step 2/4.</text>
</comment>
<comment type="subcellular location">
    <subcellularLocation>
        <location evidence="1">Cytoplasm</location>
    </subcellularLocation>
</comment>
<comment type="similarity">
    <text evidence="1">Belongs to the acetylglutamate kinase family. ArgB subfamily.</text>
</comment>
<evidence type="ECO:0000255" key="1">
    <source>
        <dbReference type="HAMAP-Rule" id="MF_00082"/>
    </source>
</evidence>
<feature type="chain" id="PRO_1000117115" description="Acetylglutamate kinase">
    <location>
        <begin position="1"/>
        <end position="258"/>
    </location>
</feature>
<feature type="binding site" evidence="1">
    <location>
        <begin position="40"/>
        <end position="41"/>
    </location>
    <ligand>
        <name>substrate</name>
    </ligand>
</feature>
<feature type="binding site" evidence="1">
    <location>
        <position position="62"/>
    </location>
    <ligand>
        <name>substrate</name>
    </ligand>
</feature>
<feature type="binding site" evidence="1">
    <location>
        <position position="158"/>
    </location>
    <ligand>
        <name>substrate</name>
    </ligand>
</feature>
<feature type="site" description="Transition state stabilizer" evidence="1">
    <location>
        <position position="8"/>
    </location>
</feature>
<feature type="site" description="Transition state stabilizer" evidence="1">
    <location>
        <position position="224"/>
    </location>
</feature>
<keyword id="KW-0028">Amino-acid biosynthesis</keyword>
<keyword id="KW-0055">Arginine biosynthesis</keyword>
<keyword id="KW-0067">ATP-binding</keyword>
<keyword id="KW-0963">Cytoplasm</keyword>
<keyword id="KW-0418">Kinase</keyword>
<keyword id="KW-0547">Nucleotide-binding</keyword>
<keyword id="KW-1185">Reference proteome</keyword>
<keyword id="KW-0808">Transferase</keyword>
<organism>
    <name type="scientific">Azobacteroides pseudotrichonymphae genomovar. CFP2</name>
    <dbReference type="NCBI Taxonomy" id="511995"/>
    <lineage>
        <taxon>Bacteria</taxon>
        <taxon>Pseudomonadati</taxon>
        <taxon>Bacteroidota</taxon>
        <taxon>Bacteroidia</taxon>
        <taxon>Bacteroidales</taxon>
        <taxon>Candidatus Azobacteroides</taxon>
    </lineage>
</organism>
<dbReference type="EC" id="2.7.2.8" evidence="1"/>
<dbReference type="EMBL" id="AP010656">
    <property type="protein sequence ID" value="BAG83990.1"/>
    <property type="molecule type" value="Genomic_DNA"/>
</dbReference>
<dbReference type="RefSeq" id="WP_012573746.1">
    <property type="nucleotide sequence ID" value="NC_011565.1"/>
</dbReference>
<dbReference type="SMR" id="B6YS18"/>
<dbReference type="STRING" id="511995.CFPG_727"/>
<dbReference type="KEGG" id="aps:CFPG_727"/>
<dbReference type="eggNOG" id="COG0548">
    <property type="taxonomic scope" value="Bacteria"/>
</dbReference>
<dbReference type="HOGENOM" id="CLU_053680_1_0_10"/>
<dbReference type="OrthoDB" id="9803155at2"/>
<dbReference type="UniPathway" id="UPA00068">
    <property type="reaction ID" value="UER00107"/>
</dbReference>
<dbReference type="Proteomes" id="UP000000723">
    <property type="component" value="Chromosome"/>
</dbReference>
<dbReference type="GO" id="GO:0005737">
    <property type="term" value="C:cytoplasm"/>
    <property type="evidence" value="ECO:0007669"/>
    <property type="project" value="UniProtKB-SubCell"/>
</dbReference>
<dbReference type="GO" id="GO:0003991">
    <property type="term" value="F:acetylglutamate kinase activity"/>
    <property type="evidence" value="ECO:0007669"/>
    <property type="project" value="UniProtKB-UniRule"/>
</dbReference>
<dbReference type="GO" id="GO:0005524">
    <property type="term" value="F:ATP binding"/>
    <property type="evidence" value="ECO:0007669"/>
    <property type="project" value="UniProtKB-UniRule"/>
</dbReference>
<dbReference type="GO" id="GO:0042450">
    <property type="term" value="P:arginine biosynthetic process via ornithine"/>
    <property type="evidence" value="ECO:0007669"/>
    <property type="project" value="UniProtKB-UniRule"/>
</dbReference>
<dbReference type="GO" id="GO:0006526">
    <property type="term" value="P:L-arginine biosynthetic process"/>
    <property type="evidence" value="ECO:0007669"/>
    <property type="project" value="UniProtKB-UniPathway"/>
</dbReference>
<dbReference type="CDD" id="cd04238">
    <property type="entry name" value="AAK_NAGK-like"/>
    <property type="match status" value="1"/>
</dbReference>
<dbReference type="Gene3D" id="3.40.1160.10">
    <property type="entry name" value="Acetylglutamate kinase-like"/>
    <property type="match status" value="1"/>
</dbReference>
<dbReference type="HAMAP" id="MF_00082">
    <property type="entry name" value="ArgB"/>
    <property type="match status" value="1"/>
</dbReference>
<dbReference type="InterPro" id="IPR036393">
    <property type="entry name" value="AceGlu_kinase-like_sf"/>
</dbReference>
<dbReference type="InterPro" id="IPR004662">
    <property type="entry name" value="AcgluKinase_fam"/>
</dbReference>
<dbReference type="InterPro" id="IPR037528">
    <property type="entry name" value="ArgB"/>
</dbReference>
<dbReference type="InterPro" id="IPR001048">
    <property type="entry name" value="Asp/Glu/Uridylate_kinase"/>
</dbReference>
<dbReference type="NCBIfam" id="TIGR00761">
    <property type="entry name" value="argB"/>
    <property type="match status" value="1"/>
</dbReference>
<dbReference type="PANTHER" id="PTHR23342">
    <property type="entry name" value="N-ACETYLGLUTAMATE SYNTHASE"/>
    <property type="match status" value="1"/>
</dbReference>
<dbReference type="PANTHER" id="PTHR23342:SF0">
    <property type="entry name" value="N-ACETYLGLUTAMATE SYNTHASE, MITOCHONDRIAL"/>
    <property type="match status" value="1"/>
</dbReference>
<dbReference type="Pfam" id="PF00696">
    <property type="entry name" value="AA_kinase"/>
    <property type="match status" value="1"/>
</dbReference>
<dbReference type="PIRSF" id="PIRSF000728">
    <property type="entry name" value="NAGK"/>
    <property type="match status" value="1"/>
</dbReference>
<dbReference type="SUPFAM" id="SSF53633">
    <property type="entry name" value="Carbamate kinase-like"/>
    <property type="match status" value="1"/>
</dbReference>